<dbReference type="EC" id="1.17.4.1"/>
<dbReference type="EMBL" id="X72948">
    <property type="protein sequence ID" value="CAA51452.1"/>
    <property type="molecule type" value="Genomic_DNA"/>
</dbReference>
<dbReference type="EMBL" id="AE006468">
    <property type="protein sequence ID" value="AAL21178.1"/>
    <property type="molecule type" value="Genomic_DNA"/>
</dbReference>
<dbReference type="PIR" id="S32629">
    <property type="entry name" value="S32629"/>
</dbReference>
<dbReference type="RefSeq" id="NP_461219.1">
    <property type="nucleotide sequence ID" value="NC_003197.2"/>
</dbReference>
<dbReference type="RefSeq" id="WP_001076487.1">
    <property type="nucleotide sequence ID" value="NC_003197.2"/>
</dbReference>
<dbReference type="SMR" id="P37426"/>
<dbReference type="STRING" id="99287.STM2277"/>
<dbReference type="PaxDb" id="99287-STM2277"/>
<dbReference type="GeneID" id="1253799"/>
<dbReference type="KEGG" id="stm:STM2277"/>
<dbReference type="PATRIC" id="fig|99287.12.peg.2410"/>
<dbReference type="HOGENOM" id="CLU_000404_3_0_6"/>
<dbReference type="OMA" id="IELPQHM"/>
<dbReference type="PhylomeDB" id="P37426"/>
<dbReference type="BioCyc" id="SENT99287:STM2277-MONOMER"/>
<dbReference type="Proteomes" id="UP000001014">
    <property type="component" value="Chromosome"/>
</dbReference>
<dbReference type="GO" id="GO:0005971">
    <property type="term" value="C:ribonucleoside-diphosphate reductase complex"/>
    <property type="evidence" value="ECO:0000318"/>
    <property type="project" value="GO_Central"/>
</dbReference>
<dbReference type="GO" id="GO:0005524">
    <property type="term" value="F:ATP binding"/>
    <property type="evidence" value="ECO:0000318"/>
    <property type="project" value="GO_Central"/>
</dbReference>
<dbReference type="GO" id="GO:0004748">
    <property type="term" value="F:ribonucleoside-diphosphate reductase activity, thioredoxin disulfide as acceptor"/>
    <property type="evidence" value="ECO:0000318"/>
    <property type="project" value="GO_Central"/>
</dbReference>
<dbReference type="GO" id="GO:0009263">
    <property type="term" value="P:deoxyribonucleotide biosynthetic process"/>
    <property type="evidence" value="ECO:0000318"/>
    <property type="project" value="GO_Central"/>
</dbReference>
<dbReference type="FunFam" id="1.10.1650.20:FF:000001">
    <property type="entry name" value="Ribonucleoside-diphosphate reductase"/>
    <property type="match status" value="1"/>
</dbReference>
<dbReference type="Gene3D" id="1.10.1650.20">
    <property type="match status" value="1"/>
</dbReference>
<dbReference type="Gene3D" id="3.20.70.20">
    <property type="match status" value="1"/>
</dbReference>
<dbReference type="InterPro" id="IPR005144">
    <property type="entry name" value="ATP-cone_dom"/>
</dbReference>
<dbReference type="InterPro" id="IPR013346">
    <property type="entry name" value="NrdE_NrdA_C"/>
</dbReference>
<dbReference type="InterPro" id="IPR000788">
    <property type="entry name" value="RNR_lg_C"/>
</dbReference>
<dbReference type="InterPro" id="IPR013509">
    <property type="entry name" value="RNR_lsu_N"/>
</dbReference>
<dbReference type="InterPro" id="IPR008926">
    <property type="entry name" value="RNR_R1-su_N"/>
</dbReference>
<dbReference type="InterPro" id="IPR039718">
    <property type="entry name" value="Rrm1"/>
</dbReference>
<dbReference type="NCBIfam" id="TIGR02506">
    <property type="entry name" value="NrdE_NrdA"/>
    <property type="match status" value="1"/>
</dbReference>
<dbReference type="NCBIfam" id="NF006578">
    <property type="entry name" value="PRK09103.1"/>
    <property type="match status" value="1"/>
</dbReference>
<dbReference type="PANTHER" id="PTHR11573">
    <property type="entry name" value="RIBONUCLEOSIDE-DIPHOSPHATE REDUCTASE LARGE CHAIN"/>
    <property type="match status" value="1"/>
</dbReference>
<dbReference type="PANTHER" id="PTHR11573:SF6">
    <property type="entry name" value="RIBONUCLEOSIDE-DIPHOSPHATE REDUCTASE LARGE SUBUNIT"/>
    <property type="match status" value="1"/>
</dbReference>
<dbReference type="Pfam" id="PF03477">
    <property type="entry name" value="ATP-cone"/>
    <property type="match status" value="1"/>
</dbReference>
<dbReference type="Pfam" id="PF02867">
    <property type="entry name" value="Ribonuc_red_lgC"/>
    <property type="match status" value="1"/>
</dbReference>
<dbReference type="Pfam" id="PF00317">
    <property type="entry name" value="Ribonuc_red_lgN"/>
    <property type="match status" value="1"/>
</dbReference>
<dbReference type="PRINTS" id="PR01183">
    <property type="entry name" value="RIBORDTASEM1"/>
</dbReference>
<dbReference type="SUPFAM" id="SSF51998">
    <property type="entry name" value="PFL-like glycyl radical enzymes"/>
    <property type="match status" value="1"/>
</dbReference>
<dbReference type="SUPFAM" id="SSF48168">
    <property type="entry name" value="R1 subunit of ribonucleotide reductase, N-terminal domain"/>
    <property type="match status" value="1"/>
</dbReference>
<dbReference type="PROSITE" id="PS51161">
    <property type="entry name" value="ATP_CONE"/>
    <property type="match status" value="1"/>
</dbReference>
<dbReference type="PROSITE" id="PS00089">
    <property type="entry name" value="RIBORED_LARGE"/>
    <property type="match status" value="1"/>
</dbReference>
<comment type="function">
    <text>Provides the precursors necessary for DNA synthesis. Catalyzes the biosynthesis of deoxyribonucleotides from the corresponding ribonucleotides. R1 contains the binding sites for both substrates and allosteric effectors and carries out the actual reduction of the ribonucleotide.</text>
</comment>
<comment type="catalytic activity">
    <reaction>
        <text>a 2'-deoxyribonucleoside 5'-diphosphate + [thioredoxin]-disulfide + H2O = a ribonucleoside 5'-diphosphate + [thioredoxin]-dithiol</text>
        <dbReference type="Rhea" id="RHEA:23252"/>
        <dbReference type="Rhea" id="RHEA-COMP:10698"/>
        <dbReference type="Rhea" id="RHEA-COMP:10700"/>
        <dbReference type="ChEBI" id="CHEBI:15377"/>
        <dbReference type="ChEBI" id="CHEBI:29950"/>
        <dbReference type="ChEBI" id="CHEBI:50058"/>
        <dbReference type="ChEBI" id="CHEBI:57930"/>
        <dbReference type="ChEBI" id="CHEBI:73316"/>
        <dbReference type="EC" id="1.17.4.1"/>
    </reaction>
</comment>
<comment type="activity regulation">
    <text evidence="1">Under complex allosteric control mediated by deoxynucleoside triphosphates and ATP binding to separate specificity and activation sites on the alpha subunit. The type of nucleotide bound at the specificity site determines substrate preference. It seems probable that ATP makes the enzyme reduce CDP and UDP, dGTP favors ADP reduction and dTTP favors GDP reduction. Stimulated by ATP and inhibited by dATP binding to the activity site (By similarity).</text>
</comment>
<comment type="subunit">
    <text>Tetramer of two alpha (R1) and two beta (R2) subunits. The B1 protein is a dimer of alpha subunits. A radical transfer pathway occurs between 'Tyr-122' of R2 and R1.</text>
</comment>
<comment type="miscellaneous">
    <text>S.typhimurium produces two separate class I enzymes. This one is the functional enzyme during growth.</text>
</comment>
<comment type="similarity">
    <text evidence="4">Belongs to the ribonucleoside diphosphate reductase large chain family.</text>
</comment>
<keyword id="KW-0021">Allosteric enzyme</keyword>
<keyword id="KW-0067">ATP-binding</keyword>
<keyword id="KW-0215">Deoxyribonucleotide synthesis</keyword>
<keyword id="KW-1015">Disulfide bond</keyword>
<keyword id="KW-0547">Nucleotide-binding</keyword>
<keyword id="KW-0560">Oxidoreductase</keyword>
<keyword id="KW-1185">Reference proteome</keyword>
<accession>P37426</accession>
<sequence>MNQSLLVTKRDGRTERINLDKIHRVLDWAAEGLNNVSVSQVELRSHIQFYDGIKTSDIHETIIKAAADLISRDAPDYQYLAARLAIFHLRKKAFGQFEPPALYHHVVKMVELGKYDNHLLEDYTEEEFKQMDSFIVHDRDMTFSYAAVKQLEGKYLVQNRVTGEIYESAQFLYILVAACLFSNYPRETRLDYVKRFYDAVSTFKISLPTPIMSGVRTPTRQFSSCVLIECGDSLDSINATSSAIVKYVSQRAGIGINAGRIRALGSPIRGGEAFHTGCIPFYKHFQTAVKSCSQGGVRGGAATLFYPMWHLEVESLLVLKNNRGVEGNRVRHMDYGVQINKLMYTRLLKGGDITLFSPSDVPGLYDAFFADQDEFERLYVKYEHDDSIRKQRVKAVELFSLMMQERASTGRIYIQNVDHCNTHSPFDPVVAPVRQSNLCLEIALPTKPLNDVNDENGEIALCTLSAFNLGAIKTLDELEELAILAVRALDALLDYQDYPIPAAKRGAMGRRTLGIGVINFAYWLAKNGKRYSDGSANNLTHKTFEAIQYYLLKASNELAKEQGACPWFNETTYAKGILPIDTYKKDLDAIVNEPLHYDWEQLRESIKTHGLRNSTLSALMPSETSSQISNATNGIEPPRGYVSIKASKDGILRQVVPDYEHLKDAYELLWEMPNNDGYLQLVGIMQKFIDQSISANTNYDPSRFPSGKVPMQQLLKDLLTAYKFGVKTLYYQNTRDGAEDAQDDLAPSIQDDGCESGACKI</sequence>
<name>RIR1_SALTY</name>
<feature type="chain" id="PRO_0000187213" description="Ribonucleoside-diphosphate reductase 1 subunit alpha">
    <location>
        <begin position="1"/>
        <end position="761"/>
    </location>
</feature>
<feature type="domain" description="ATP-cone" evidence="3">
    <location>
        <begin position="5"/>
        <end position="95"/>
    </location>
</feature>
<feature type="active site" description="Proton acceptor" evidence="1">
    <location>
        <position position="437"/>
    </location>
</feature>
<feature type="active site" description="Cysteine radical intermediate" evidence="1">
    <location>
        <position position="439"/>
    </location>
</feature>
<feature type="active site" description="Proton acceptor" evidence="1">
    <location>
        <position position="441"/>
    </location>
</feature>
<feature type="binding site" evidence="2">
    <location>
        <position position="9"/>
    </location>
    <ligand>
        <name>ATP</name>
        <dbReference type="ChEBI" id="CHEBI:30616"/>
        <note>allosteric activator</note>
    </ligand>
</feature>
<feature type="binding site" evidence="2">
    <location>
        <begin position="15"/>
        <end position="21"/>
    </location>
    <ligand>
        <name>ATP</name>
        <dbReference type="ChEBI" id="CHEBI:30616"/>
        <note>allosteric activator</note>
    </ligand>
</feature>
<feature type="binding site" evidence="2">
    <location>
        <position position="55"/>
    </location>
    <ligand>
        <name>ATP</name>
        <dbReference type="ChEBI" id="CHEBI:30616"/>
        <note>allosteric activator</note>
    </ligand>
</feature>
<feature type="binding site" evidence="2">
    <location>
        <position position="91"/>
    </location>
    <ligand>
        <name>ATP</name>
        <dbReference type="ChEBI" id="CHEBI:30616"/>
        <note>allosteric activator</note>
    </ligand>
</feature>
<feature type="binding site" evidence="2">
    <location>
        <position position="209"/>
    </location>
    <ligand>
        <name>GDP</name>
        <dbReference type="ChEBI" id="CHEBI:58189"/>
    </ligand>
</feature>
<feature type="binding site" evidence="2">
    <location>
        <begin position="232"/>
        <end position="234"/>
    </location>
    <ligand>
        <name>dTTP</name>
        <dbReference type="ChEBI" id="CHEBI:37568"/>
        <note>allosteric effector that controls substrate specificity</note>
    </ligand>
</feature>
<feature type="binding site" evidence="2">
    <location>
        <position position="262"/>
    </location>
    <ligand>
        <name>dTTP</name>
        <dbReference type="ChEBI" id="CHEBI:37568"/>
        <note>allosteric effector that controls substrate specificity</note>
    </ligand>
</feature>
<feature type="binding site" evidence="2">
    <location>
        <position position="269"/>
    </location>
    <ligand>
        <name>dTTP</name>
        <dbReference type="ChEBI" id="CHEBI:37568"/>
        <note>allosteric effector that controls substrate specificity</note>
    </ligand>
</feature>
<feature type="binding site" evidence="2">
    <location>
        <position position="437"/>
    </location>
    <ligand>
        <name>GDP</name>
        <dbReference type="ChEBI" id="CHEBI:58189"/>
    </ligand>
</feature>
<feature type="binding site" evidence="2">
    <location>
        <position position="441"/>
    </location>
    <ligand>
        <name>GDP</name>
        <dbReference type="ChEBI" id="CHEBI:58189"/>
    </ligand>
</feature>
<feature type="binding site" evidence="2">
    <location>
        <begin position="623"/>
        <end position="625"/>
    </location>
    <ligand>
        <name>GDP</name>
        <dbReference type="ChEBI" id="CHEBI:58189"/>
    </ligand>
</feature>
<feature type="site" description="Important for hydrogen atom transfer" evidence="1">
    <location>
        <position position="225"/>
    </location>
</feature>
<feature type="site" description="Important for hydrogen atom transfer" evidence="1">
    <location>
        <position position="462"/>
    </location>
</feature>
<feature type="site" description="Important for electron transfer" evidence="1">
    <location>
        <position position="730"/>
    </location>
</feature>
<feature type="site" description="Important for electron transfer" evidence="1">
    <location>
        <position position="731"/>
    </location>
</feature>
<feature type="site" description="Interacts with thioredoxin/glutaredoxin" evidence="1">
    <location>
        <position position="754"/>
    </location>
</feature>
<feature type="site" description="Interacts with thioredoxin/glutaredoxin" evidence="1">
    <location>
        <position position="759"/>
    </location>
</feature>
<feature type="disulfide bond" description="Redox-active" evidence="1">
    <location>
        <begin position="225"/>
        <end position="462"/>
    </location>
</feature>
<organism>
    <name type="scientific">Salmonella typhimurium (strain LT2 / SGSC1412 / ATCC 700720)</name>
    <dbReference type="NCBI Taxonomy" id="99287"/>
    <lineage>
        <taxon>Bacteria</taxon>
        <taxon>Pseudomonadati</taxon>
        <taxon>Pseudomonadota</taxon>
        <taxon>Gammaproteobacteria</taxon>
        <taxon>Enterobacterales</taxon>
        <taxon>Enterobacteriaceae</taxon>
        <taxon>Salmonella</taxon>
    </lineage>
</organism>
<proteinExistence type="inferred from homology"/>
<reference key="1">
    <citation type="journal article" date="1994" name="J. Bacteriol.">
        <title>Cloning and sequencing of the genes from Salmonella typhimurium encoding a new bacterial ribonucleotide reductase.</title>
        <authorList>
            <person name="Jordan A."/>
            <person name="Gibert I."/>
            <person name="Barbe J."/>
        </authorList>
    </citation>
    <scope>NUCLEOTIDE SEQUENCE [GENOMIC DNA]</scope>
    <source>
        <strain>LT2</strain>
    </source>
</reference>
<reference key="2">
    <citation type="journal article" date="2001" name="Nature">
        <title>Complete genome sequence of Salmonella enterica serovar Typhimurium LT2.</title>
        <authorList>
            <person name="McClelland M."/>
            <person name="Sanderson K.E."/>
            <person name="Spieth J."/>
            <person name="Clifton S.W."/>
            <person name="Latreille P."/>
            <person name="Courtney L."/>
            <person name="Porwollik S."/>
            <person name="Ali J."/>
            <person name="Dante M."/>
            <person name="Du F."/>
            <person name="Hou S."/>
            <person name="Layman D."/>
            <person name="Leonard S."/>
            <person name="Nguyen C."/>
            <person name="Scott K."/>
            <person name="Holmes A."/>
            <person name="Grewal N."/>
            <person name="Mulvaney E."/>
            <person name="Ryan E."/>
            <person name="Sun H."/>
            <person name="Florea L."/>
            <person name="Miller W."/>
            <person name="Stoneking T."/>
            <person name="Nhan M."/>
            <person name="Waterston R."/>
            <person name="Wilson R.K."/>
        </authorList>
    </citation>
    <scope>NUCLEOTIDE SEQUENCE [LARGE SCALE GENOMIC DNA]</scope>
    <source>
        <strain>LT2 / SGSC1412 / ATCC 700720</strain>
    </source>
</reference>
<protein>
    <recommendedName>
        <fullName>Ribonucleoside-diphosphate reductase 1 subunit alpha</fullName>
        <ecNumber>1.17.4.1</ecNumber>
    </recommendedName>
    <alternativeName>
        <fullName>Protein B1</fullName>
    </alternativeName>
    <alternativeName>
        <fullName>Ribonucleoside-diphosphate reductase 1 R1 subunit</fullName>
    </alternativeName>
    <alternativeName>
        <fullName>Ribonucleotide reductase 1</fullName>
    </alternativeName>
</protein>
<gene>
    <name type="primary">nrdA</name>
    <name type="ordered locus">STM2277</name>
</gene>
<evidence type="ECO:0000250" key="1"/>
<evidence type="ECO:0000250" key="2">
    <source>
        <dbReference type="UniProtKB" id="P00452"/>
    </source>
</evidence>
<evidence type="ECO:0000255" key="3">
    <source>
        <dbReference type="PROSITE-ProRule" id="PRU00492"/>
    </source>
</evidence>
<evidence type="ECO:0000305" key="4"/>